<evidence type="ECO:0000255" key="1">
    <source>
        <dbReference type="HAMAP-Rule" id="MF_00524"/>
    </source>
</evidence>
<feature type="chain" id="PRO_1000127706" description="Glucokinase">
    <location>
        <begin position="1"/>
        <end position="321"/>
    </location>
</feature>
<feature type="binding site" evidence="1">
    <location>
        <begin position="8"/>
        <end position="13"/>
    </location>
    <ligand>
        <name>ATP</name>
        <dbReference type="ChEBI" id="CHEBI:30616"/>
    </ligand>
</feature>
<dbReference type="EC" id="2.7.1.2" evidence="1"/>
<dbReference type="EMBL" id="CP000970">
    <property type="protein sequence ID" value="ACB17842.1"/>
    <property type="molecule type" value="Genomic_DNA"/>
</dbReference>
<dbReference type="RefSeq" id="WP_000170362.1">
    <property type="nucleotide sequence ID" value="NC_010498.1"/>
</dbReference>
<dbReference type="SMR" id="B1LMI6"/>
<dbReference type="KEGG" id="ecm:EcSMS35_2540"/>
<dbReference type="HOGENOM" id="CLU_042582_1_0_6"/>
<dbReference type="Proteomes" id="UP000007011">
    <property type="component" value="Chromosome"/>
</dbReference>
<dbReference type="GO" id="GO:0005829">
    <property type="term" value="C:cytosol"/>
    <property type="evidence" value="ECO:0007669"/>
    <property type="project" value="TreeGrafter"/>
</dbReference>
<dbReference type="GO" id="GO:0005524">
    <property type="term" value="F:ATP binding"/>
    <property type="evidence" value="ECO:0007669"/>
    <property type="project" value="UniProtKB-UniRule"/>
</dbReference>
<dbReference type="GO" id="GO:0005536">
    <property type="term" value="F:D-glucose binding"/>
    <property type="evidence" value="ECO:0007669"/>
    <property type="project" value="InterPro"/>
</dbReference>
<dbReference type="GO" id="GO:0004340">
    <property type="term" value="F:glucokinase activity"/>
    <property type="evidence" value="ECO:0007669"/>
    <property type="project" value="UniProtKB-UniRule"/>
</dbReference>
<dbReference type="GO" id="GO:0006096">
    <property type="term" value="P:glycolytic process"/>
    <property type="evidence" value="ECO:0007669"/>
    <property type="project" value="UniProtKB-UniRule"/>
</dbReference>
<dbReference type="CDD" id="cd24008">
    <property type="entry name" value="ASKHA_NBD_GLK"/>
    <property type="match status" value="1"/>
</dbReference>
<dbReference type="FunFam" id="3.30.420.40:FF:000045">
    <property type="entry name" value="Glucokinase"/>
    <property type="match status" value="1"/>
</dbReference>
<dbReference type="FunFam" id="3.40.367.20:FF:000002">
    <property type="entry name" value="Glucokinase"/>
    <property type="match status" value="1"/>
</dbReference>
<dbReference type="Gene3D" id="3.30.420.40">
    <property type="match status" value="1"/>
</dbReference>
<dbReference type="Gene3D" id="3.40.367.20">
    <property type="match status" value="1"/>
</dbReference>
<dbReference type="HAMAP" id="MF_00524">
    <property type="entry name" value="Glucokinase"/>
    <property type="match status" value="1"/>
</dbReference>
<dbReference type="InterPro" id="IPR043129">
    <property type="entry name" value="ATPase_NBD"/>
</dbReference>
<dbReference type="InterPro" id="IPR050201">
    <property type="entry name" value="Bacterial_glucokinase"/>
</dbReference>
<dbReference type="InterPro" id="IPR003836">
    <property type="entry name" value="Glucokinase"/>
</dbReference>
<dbReference type="NCBIfam" id="TIGR00749">
    <property type="entry name" value="glk"/>
    <property type="match status" value="1"/>
</dbReference>
<dbReference type="NCBIfam" id="NF001414">
    <property type="entry name" value="PRK00292.1-1"/>
    <property type="match status" value="1"/>
</dbReference>
<dbReference type="NCBIfam" id="NF001416">
    <property type="entry name" value="PRK00292.1-3"/>
    <property type="match status" value="1"/>
</dbReference>
<dbReference type="PANTHER" id="PTHR47690">
    <property type="entry name" value="GLUCOKINASE"/>
    <property type="match status" value="1"/>
</dbReference>
<dbReference type="PANTHER" id="PTHR47690:SF1">
    <property type="entry name" value="GLUCOKINASE"/>
    <property type="match status" value="1"/>
</dbReference>
<dbReference type="Pfam" id="PF02685">
    <property type="entry name" value="Glucokinase"/>
    <property type="match status" value="1"/>
</dbReference>
<dbReference type="SUPFAM" id="SSF53067">
    <property type="entry name" value="Actin-like ATPase domain"/>
    <property type="match status" value="1"/>
</dbReference>
<proteinExistence type="inferred from homology"/>
<sequence length="321" mass="34735">MTKYALVGDVGGTNARLALCDIASGEISQAKTYSGLDYPSLEAVIRVYLEEHKVEVKDGCIAIACPITGDWVAMTNHTWAFSIAEMKKNLGFSYLEIINDFTAVSMAIPMLKKEHLIQFGGAEPVEGKPIAVYGAGTGLGVAHLVHVDKRWVSLPGEGGHVDFAPNSEEEGIILEILRAEIGHVSAERVLSGPGLVNLYRAIVKADNRLPENLKPKDITERALADSCTDCRRALSLFCVIMGRFGGNLALNLGTFGGVFIAGGIVPRFLEFFKASGFRAAFEDKGRFKEYVHDIPVYLIVHDNPGLLGSGAHLRQTLGHIL</sequence>
<organism>
    <name type="scientific">Escherichia coli (strain SMS-3-5 / SECEC)</name>
    <dbReference type="NCBI Taxonomy" id="439855"/>
    <lineage>
        <taxon>Bacteria</taxon>
        <taxon>Pseudomonadati</taxon>
        <taxon>Pseudomonadota</taxon>
        <taxon>Gammaproteobacteria</taxon>
        <taxon>Enterobacterales</taxon>
        <taxon>Enterobacteriaceae</taxon>
        <taxon>Escherichia</taxon>
    </lineage>
</organism>
<gene>
    <name evidence="1" type="primary">glk</name>
    <name type="ordered locus">EcSMS35_2540</name>
</gene>
<protein>
    <recommendedName>
        <fullName evidence="1">Glucokinase</fullName>
        <ecNumber evidence="1">2.7.1.2</ecNumber>
    </recommendedName>
    <alternativeName>
        <fullName evidence="1">Glucose kinase</fullName>
    </alternativeName>
</protein>
<reference key="1">
    <citation type="journal article" date="2008" name="J. Bacteriol.">
        <title>Insights into the environmental resistance gene pool from the genome sequence of the multidrug-resistant environmental isolate Escherichia coli SMS-3-5.</title>
        <authorList>
            <person name="Fricke W.F."/>
            <person name="Wright M.S."/>
            <person name="Lindell A.H."/>
            <person name="Harkins D.M."/>
            <person name="Baker-Austin C."/>
            <person name="Ravel J."/>
            <person name="Stepanauskas R."/>
        </authorList>
    </citation>
    <scope>NUCLEOTIDE SEQUENCE [LARGE SCALE GENOMIC DNA]</scope>
    <source>
        <strain>SMS-3-5 / SECEC</strain>
    </source>
</reference>
<keyword id="KW-0067">ATP-binding</keyword>
<keyword id="KW-0963">Cytoplasm</keyword>
<keyword id="KW-0324">Glycolysis</keyword>
<keyword id="KW-0418">Kinase</keyword>
<keyword id="KW-0547">Nucleotide-binding</keyword>
<keyword id="KW-0808">Transferase</keyword>
<name>GLK_ECOSM</name>
<accession>B1LMI6</accession>
<comment type="catalytic activity">
    <reaction evidence="1">
        <text>D-glucose + ATP = D-glucose 6-phosphate + ADP + H(+)</text>
        <dbReference type="Rhea" id="RHEA:17825"/>
        <dbReference type="ChEBI" id="CHEBI:4167"/>
        <dbReference type="ChEBI" id="CHEBI:15378"/>
        <dbReference type="ChEBI" id="CHEBI:30616"/>
        <dbReference type="ChEBI" id="CHEBI:61548"/>
        <dbReference type="ChEBI" id="CHEBI:456216"/>
        <dbReference type="EC" id="2.7.1.2"/>
    </reaction>
</comment>
<comment type="subcellular location">
    <subcellularLocation>
        <location evidence="1">Cytoplasm</location>
    </subcellularLocation>
</comment>
<comment type="similarity">
    <text evidence="1">Belongs to the bacterial glucokinase family.</text>
</comment>